<feature type="signal peptide" description="Tat-type signal" evidence="2 4">
    <location>
        <begin position="1"/>
        <end position="43"/>
    </location>
</feature>
<feature type="chain" id="PRO_0000454141" description="Chloroethene reductive dehalogenase" evidence="4">
    <location>
        <begin position="44"/>
        <end position="519"/>
    </location>
</feature>
<feature type="domain" description="4Fe-4S ferredoxin-type 1" evidence="3">
    <location>
        <begin position="388"/>
        <end position="420"/>
    </location>
</feature>
<feature type="domain" description="4Fe-4S ferredoxin-type 2" evidence="3">
    <location>
        <begin position="435"/>
        <end position="465"/>
    </location>
</feature>
<feature type="binding site" evidence="3">
    <location>
        <position position="400"/>
    </location>
    <ligand>
        <name>[4Fe-4S] cluster</name>
        <dbReference type="ChEBI" id="CHEBI:49883"/>
        <label>1</label>
    </ligand>
</feature>
<feature type="binding site" evidence="3">
    <location>
        <position position="403"/>
    </location>
    <ligand>
        <name>[4Fe-4S] cluster</name>
        <dbReference type="ChEBI" id="CHEBI:49883"/>
        <label>1</label>
    </ligand>
</feature>
<feature type="binding site" evidence="3">
    <location>
        <position position="406"/>
    </location>
    <ligand>
        <name>[4Fe-4S] cluster</name>
        <dbReference type="ChEBI" id="CHEBI:49883"/>
        <label>1</label>
    </ligand>
</feature>
<feature type="binding site" evidence="3">
    <location>
        <position position="410"/>
    </location>
    <ligand>
        <name>[4Fe-4S] cluster</name>
        <dbReference type="ChEBI" id="CHEBI:49883"/>
        <label>2</label>
    </ligand>
</feature>
<feature type="binding site" evidence="3">
    <location>
        <position position="444"/>
    </location>
    <ligand>
        <name>[4Fe-4S] cluster</name>
        <dbReference type="ChEBI" id="CHEBI:49883"/>
        <label>2</label>
    </ligand>
</feature>
<feature type="binding site" evidence="3">
    <location>
        <position position="448"/>
    </location>
    <ligand>
        <name>[4Fe-4S] cluster</name>
        <dbReference type="ChEBI" id="CHEBI:49883"/>
        <label>2</label>
    </ligand>
</feature>
<feature type="binding site" evidence="3">
    <location>
        <position position="451"/>
    </location>
    <ligand>
        <name>[4Fe-4S] cluster</name>
        <dbReference type="ChEBI" id="CHEBI:49883"/>
        <label>2</label>
    </ligand>
</feature>
<feature type="binding site" evidence="3">
    <location>
        <position position="455"/>
    </location>
    <ligand>
        <name>[4Fe-4S] cluster</name>
        <dbReference type="ChEBI" id="CHEBI:49883"/>
        <label>1</label>
    </ligand>
</feature>
<comment type="function">
    <text evidence="4">Catalyzes the reductive dechlorination of chloroethene (or vinyl chloride, VC) to ethene (PubMed:15294827). Can also reduce all dichloroethene (DCE) isomers, but not tetrachloroethene (PCE) or trichloroethene (TCE), at high rates (PubMed:15294827). Reduced methyl viologen can act as the artificial electron donor (PubMed:15294827).</text>
</comment>
<comment type="catalytic activity">
    <reaction evidence="4">
        <text>chloroethene + AH2 = ethene + chloride + A + H(+)</text>
        <dbReference type="Rhea" id="RHEA:68004"/>
        <dbReference type="ChEBI" id="CHEBI:13193"/>
        <dbReference type="ChEBI" id="CHEBI:15378"/>
        <dbReference type="ChEBI" id="CHEBI:17499"/>
        <dbReference type="ChEBI" id="CHEBI:17996"/>
        <dbReference type="ChEBI" id="CHEBI:18153"/>
        <dbReference type="ChEBI" id="CHEBI:28509"/>
    </reaction>
    <physiologicalReaction direction="left-to-right" evidence="4">
        <dbReference type="Rhea" id="RHEA:68005"/>
    </physiologicalReaction>
</comment>
<comment type="catalytic activity">
    <reaction evidence="4">
        <text>(Z)-1,2-dichloroethene + AH2 = chloroethene + chloride + A + H(+)</text>
        <dbReference type="Rhea" id="RHEA:67996"/>
        <dbReference type="ChEBI" id="CHEBI:13193"/>
        <dbReference type="ChEBI" id="CHEBI:15378"/>
        <dbReference type="ChEBI" id="CHEBI:17499"/>
        <dbReference type="ChEBI" id="CHEBI:17996"/>
        <dbReference type="ChEBI" id="CHEBI:28509"/>
        <dbReference type="ChEBI" id="CHEBI:28805"/>
    </reaction>
    <physiologicalReaction direction="left-to-right" evidence="4">
        <dbReference type="Rhea" id="RHEA:67997"/>
    </physiologicalReaction>
</comment>
<comment type="catalytic activity">
    <reaction evidence="4">
        <text>1,1-dichloroethene + AH2 = chloroethene + chloride + A + H(+)</text>
        <dbReference type="Rhea" id="RHEA:68000"/>
        <dbReference type="ChEBI" id="CHEBI:13193"/>
        <dbReference type="ChEBI" id="CHEBI:15378"/>
        <dbReference type="ChEBI" id="CHEBI:17499"/>
        <dbReference type="ChEBI" id="CHEBI:17996"/>
        <dbReference type="ChEBI" id="CHEBI:28509"/>
        <dbReference type="ChEBI" id="CHEBI:34031"/>
    </reaction>
    <physiologicalReaction direction="left-to-right" evidence="4">
        <dbReference type="Rhea" id="RHEA:68001"/>
    </physiologicalReaction>
</comment>
<comment type="cofactor">
    <cofactor evidence="3">
        <name>[4Fe-4S] cluster</name>
        <dbReference type="ChEBI" id="CHEBI:49883"/>
    </cofactor>
    <text evidence="3">Binds 2 [4Fe-4S] clusters.</text>
</comment>
<comment type="cofactor">
    <cofactor evidence="1">
        <name>corrinoid</name>
        <dbReference type="ChEBI" id="CHEBI:33913"/>
    </cofactor>
</comment>
<comment type="subcellular location">
    <subcellularLocation>
        <location evidence="4">Cell membrane</location>
    </subcellularLocation>
</comment>
<comment type="induction">
    <text evidence="4">Cotranscribed with vcrB and vcrC.</text>
</comment>
<comment type="PTM">
    <text evidence="2 4">Predicted to be exported by the Tat system. The position of the signal peptide cleavage has been experimentally proven.</text>
</comment>
<comment type="similarity">
    <text evidence="6">Belongs to the PceA family.</text>
</comment>
<sequence length="519" mass="57534">MSKFHKTISRRDFMKGLGLAGAGIGAVAASAPVFHDIDELVSSEANSTKDQPWYVKHREHFDPTITVDWDIFDRYDGYQHKGVYEGPPDAPFTSWGNRLQVRMSGEEQKKRILAAKKERFPGWDGGLHGRGDQRADALFYAVTQPFPGSGEEGHGLFQPYPDQPGKFYARWGLYGPPHDSAPPDGSVPKWEGTPEDNFLMLRAAAKYFGAGGVGALNLADPKCKKLIYKKAQPMTLGKGTYSEIGGPGMIDAKIYPKVPDHAVPINFKEADYSYYNDAEWVIPTKCESIFTFTLPQPQELNKRTGGIAGAGSYTVYKDFARVGTLVQMFIKYLGYHALYWPIGWGPGGCFTTFDGQGEQGRTGAAIHWKFGSSQRGSERVITDLPIAPTPPIDAGMFEFCKTCYICRDVCVSGGVHQEDEPTWDSGNWWNVQGYLGYRTDWSGCHNQCGMCQSSCPFTYLGLENASLVHKIVKGVVANTTVFNSFFTNMEKALGYGDLTMENSNWWKEEGPIYGFDPGT</sequence>
<gene>
    <name evidence="5" type="primary">vcrA</name>
    <name evidence="7" type="ordered locus">DhcVS_1291</name>
</gene>
<accession>Q69GM4</accession>
<accession>D2BJ91</accession>
<protein>
    <recommendedName>
        <fullName evidence="6">Chloroethene reductive dehalogenase</fullName>
        <ecNumber evidence="4">1.21.99.-</ecNumber>
    </recommendedName>
    <alternativeName>
        <fullName evidence="5">Vinyl chloride reductase</fullName>
        <shortName evidence="5">VC reductase</shortName>
    </alternativeName>
    <alternativeName>
        <fullName evidence="6">Vinyl chloride reductive dehalogenase</fullName>
    </alternativeName>
</protein>
<keyword id="KW-0004">4Fe-4S</keyword>
<keyword id="KW-1003">Cell membrane</keyword>
<keyword id="KW-0903">Direct protein sequencing</keyword>
<keyword id="KW-0408">Iron</keyword>
<keyword id="KW-0411">Iron-sulfur</keyword>
<keyword id="KW-0472">Membrane</keyword>
<keyword id="KW-0479">Metal-binding</keyword>
<keyword id="KW-0560">Oxidoreductase</keyword>
<keyword id="KW-1185">Reference proteome</keyword>
<keyword id="KW-0732">Signal</keyword>
<organism>
    <name type="scientific">Dehalococcoides mccartyi (strain VS)</name>
    <dbReference type="NCBI Taxonomy" id="311424"/>
    <lineage>
        <taxon>Bacteria</taxon>
        <taxon>Bacillati</taxon>
        <taxon>Chloroflexota</taxon>
        <taxon>Dehalococcoidia</taxon>
        <taxon>Dehalococcoidales</taxon>
        <taxon>Dehalococcoidaceae</taxon>
        <taxon>Dehalococcoides</taxon>
    </lineage>
</organism>
<proteinExistence type="evidence at protein level"/>
<evidence type="ECO:0000250" key="1">
    <source>
        <dbReference type="UniProtKB" id="O68252"/>
    </source>
</evidence>
<evidence type="ECO:0000255" key="2">
    <source>
        <dbReference type="PROSITE-ProRule" id="PRU00648"/>
    </source>
</evidence>
<evidence type="ECO:0000255" key="3">
    <source>
        <dbReference type="PROSITE-ProRule" id="PRU00711"/>
    </source>
</evidence>
<evidence type="ECO:0000269" key="4">
    <source>
    </source>
</evidence>
<evidence type="ECO:0000303" key="5">
    <source>
    </source>
</evidence>
<evidence type="ECO:0000305" key="6"/>
<evidence type="ECO:0000312" key="7">
    <source>
        <dbReference type="EMBL" id="ACZ62391.1"/>
    </source>
</evidence>
<name>VCRA_DEHMV</name>
<dbReference type="EC" id="1.21.99.-" evidence="4"/>
<dbReference type="EMBL" id="AY322364">
    <property type="protein sequence ID" value="AAQ94119.1"/>
    <property type="molecule type" value="Genomic_DNA"/>
</dbReference>
<dbReference type="EMBL" id="CP001827">
    <property type="protein sequence ID" value="ACZ62391.1"/>
    <property type="molecule type" value="Genomic_DNA"/>
</dbReference>
<dbReference type="RefSeq" id="WP_012882535.1">
    <property type="nucleotide sequence ID" value="NC_013552.1"/>
</dbReference>
<dbReference type="SMR" id="Q69GM4"/>
<dbReference type="KEGG" id="dev:DhcVS_1291"/>
<dbReference type="eggNOG" id="COG2768">
    <property type="taxonomic scope" value="Bacteria"/>
</dbReference>
<dbReference type="HOGENOM" id="CLU_036586_0_1_0"/>
<dbReference type="OrthoDB" id="9803192at2"/>
<dbReference type="Proteomes" id="UP000002506">
    <property type="component" value="Chromosome"/>
</dbReference>
<dbReference type="GO" id="GO:0005886">
    <property type="term" value="C:plasma membrane"/>
    <property type="evidence" value="ECO:0007669"/>
    <property type="project" value="UniProtKB-SubCell"/>
</dbReference>
<dbReference type="GO" id="GO:0051539">
    <property type="term" value="F:4 iron, 4 sulfur cluster binding"/>
    <property type="evidence" value="ECO:0007669"/>
    <property type="project" value="UniProtKB-KW"/>
</dbReference>
<dbReference type="GO" id="GO:0046872">
    <property type="term" value="F:metal ion binding"/>
    <property type="evidence" value="ECO:0007669"/>
    <property type="project" value="UniProtKB-KW"/>
</dbReference>
<dbReference type="GO" id="GO:0016491">
    <property type="term" value="F:oxidoreductase activity"/>
    <property type="evidence" value="ECO:0007669"/>
    <property type="project" value="UniProtKB-KW"/>
</dbReference>
<dbReference type="InterPro" id="IPR017896">
    <property type="entry name" value="4Fe4S_Fe-S-bd"/>
</dbReference>
<dbReference type="InterPro" id="IPR012832">
    <property type="entry name" value="RDH"/>
</dbReference>
<dbReference type="InterPro" id="IPR028894">
    <property type="entry name" value="RDH_dom"/>
</dbReference>
<dbReference type="InterPro" id="IPR006311">
    <property type="entry name" value="TAT_signal"/>
</dbReference>
<dbReference type="InterPro" id="IPR019546">
    <property type="entry name" value="TAT_signal_bac_arc"/>
</dbReference>
<dbReference type="NCBIfam" id="TIGR02486">
    <property type="entry name" value="RDH"/>
    <property type="match status" value="1"/>
</dbReference>
<dbReference type="NCBIfam" id="TIGR01409">
    <property type="entry name" value="TAT_signal_seq"/>
    <property type="match status" value="1"/>
</dbReference>
<dbReference type="Pfam" id="PF13486">
    <property type="entry name" value="Dehalogenase"/>
    <property type="match status" value="1"/>
</dbReference>
<dbReference type="SUPFAM" id="SSF54862">
    <property type="entry name" value="4Fe-4S ferredoxins"/>
    <property type="match status" value="1"/>
</dbReference>
<dbReference type="PROSITE" id="PS51379">
    <property type="entry name" value="4FE4S_FER_2"/>
    <property type="match status" value="2"/>
</dbReference>
<dbReference type="PROSITE" id="PS51318">
    <property type="entry name" value="TAT"/>
    <property type="match status" value="1"/>
</dbReference>
<reference key="1">
    <citation type="journal article" date="2004" name="Appl. Environ. Microbiol.">
        <title>Molecular identification of the catabolic vinyl chloride reductase from Dehalococcoides sp. strain VS and its environmental distribution.</title>
        <authorList>
            <person name="Muller J.A."/>
            <person name="Rosner B.M."/>
            <person name="Von Abendroth G."/>
            <person name="Meshulam-Simon G."/>
            <person name="McCarty P.L."/>
            <person name="Spormann A.M."/>
        </authorList>
    </citation>
    <scope>NUCLEOTIDE SEQUENCE [GENOMIC DNA]</scope>
    <scope>PROTEIN SEQUENCE OF 44-63; 83-94; 136-148; 287-295 AND 322-329</scope>
    <scope>FUNCTION</scope>
    <scope>CATALYTIC ACTIVITY</scope>
    <scope>SUBCELLULAR LOCATION</scope>
    <scope>INDUCTION</scope>
    <source>
        <strain>VS</strain>
    </source>
</reference>
<reference key="2">
    <citation type="journal article" date="2009" name="PLoS Genet.">
        <title>Localized plasticity in the streamlined genomes of vinyl chloride respiring Dehalococcoides.</title>
        <authorList>
            <person name="McMurdie P.J."/>
            <person name="Behrens S.F."/>
            <person name="Muller J.A."/>
            <person name="Goke J."/>
            <person name="Ritalahti K.M."/>
            <person name="Wagner R."/>
            <person name="Goltsman E."/>
            <person name="Lapidus A."/>
            <person name="Holmes S."/>
            <person name="Loffler F.E."/>
            <person name="Spormann A.M."/>
        </authorList>
    </citation>
    <scope>NUCLEOTIDE SEQUENCE [LARGE SCALE GENOMIC DNA]</scope>
    <source>
        <strain>VS</strain>
    </source>
</reference>